<reference key="1">
    <citation type="journal article" date="2009" name="Proc. Natl. Acad. Sci. U.S.A.">
        <title>Biogeography of the Sulfolobus islandicus pan-genome.</title>
        <authorList>
            <person name="Reno M.L."/>
            <person name="Held N.L."/>
            <person name="Fields C.J."/>
            <person name="Burke P.V."/>
            <person name="Whitaker R.J."/>
        </authorList>
    </citation>
    <scope>NUCLEOTIDE SEQUENCE [LARGE SCALE GENOMIC DNA]</scope>
    <source>
        <strain>M.16.27</strain>
    </source>
</reference>
<accession>C3N6A4</accession>
<keyword id="KW-0028">Amino-acid biosynthesis</keyword>
<keyword id="KW-0067">ATP-binding</keyword>
<keyword id="KW-0963">Cytoplasm</keyword>
<keyword id="KW-0368">Histidine biosynthesis</keyword>
<keyword id="KW-0378">Hydrolase</keyword>
<keyword id="KW-0547">Nucleotide-binding</keyword>
<feature type="chain" id="PRO_1000213290" description="Phosphoribosyl-ATP pyrophosphatase">
    <location>
        <begin position="1"/>
        <end position="94"/>
    </location>
</feature>
<gene>
    <name evidence="1" type="primary">hisE</name>
    <name type="ordered locus">M1627_1649</name>
</gene>
<evidence type="ECO:0000255" key="1">
    <source>
        <dbReference type="HAMAP-Rule" id="MF_01020"/>
    </source>
</evidence>
<dbReference type="EC" id="3.6.1.31" evidence="1"/>
<dbReference type="EMBL" id="CP001401">
    <property type="protein sequence ID" value="ACP55529.1"/>
    <property type="molecule type" value="Genomic_DNA"/>
</dbReference>
<dbReference type="RefSeq" id="WP_012718912.1">
    <property type="nucleotide sequence ID" value="NC_012632.1"/>
</dbReference>
<dbReference type="SMR" id="C3N6A4"/>
<dbReference type="GeneID" id="84058940"/>
<dbReference type="KEGG" id="sim:M1627_1649"/>
<dbReference type="HOGENOM" id="CLU_123337_1_2_2"/>
<dbReference type="UniPathway" id="UPA00031">
    <property type="reaction ID" value="UER00007"/>
</dbReference>
<dbReference type="Proteomes" id="UP000002307">
    <property type="component" value="Chromosome"/>
</dbReference>
<dbReference type="GO" id="GO:0005737">
    <property type="term" value="C:cytoplasm"/>
    <property type="evidence" value="ECO:0007669"/>
    <property type="project" value="UniProtKB-SubCell"/>
</dbReference>
<dbReference type="GO" id="GO:0005524">
    <property type="term" value="F:ATP binding"/>
    <property type="evidence" value="ECO:0007669"/>
    <property type="project" value="UniProtKB-KW"/>
</dbReference>
<dbReference type="GO" id="GO:0004636">
    <property type="term" value="F:phosphoribosyl-ATP diphosphatase activity"/>
    <property type="evidence" value="ECO:0007669"/>
    <property type="project" value="UniProtKB-UniRule"/>
</dbReference>
<dbReference type="GO" id="GO:0000105">
    <property type="term" value="P:L-histidine biosynthetic process"/>
    <property type="evidence" value="ECO:0007669"/>
    <property type="project" value="UniProtKB-UniRule"/>
</dbReference>
<dbReference type="CDD" id="cd11534">
    <property type="entry name" value="NTP-PPase_HisIE_like"/>
    <property type="match status" value="1"/>
</dbReference>
<dbReference type="Gene3D" id="1.10.287.1080">
    <property type="entry name" value="MazG-like"/>
    <property type="match status" value="1"/>
</dbReference>
<dbReference type="HAMAP" id="MF_01020">
    <property type="entry name" value="HisE"/>
    <property type="match status" value="1"/>
</dbReference>
<dbReference type="InterPro" id="IPR008179">
    <property type="entry name" value="HisE"/>
</dbReference>
<dbReference type="InterPro" id="IPR021130">
    <property type="entry name" value="PRib-ATP_PPHydrolase-like"/>
</dbReference>
<dbReference type="NCBIfam" id="TIGR03188">
    <property type="entry name" value="histidine_hisI"/>
    <property type="match status" value="1"/>
</dbReference>
<dbReference type="PANTHER" id="PTHR42945">
    <property type="entry name" value="HISTIDINE BIOSYNTHESIS BIFUNCTIONAL PROTEIN"/>
    <property type="match status" value="1"/>
</dbReference>
<dbReference type="PANTHER" id="PTHR42945:SF1">
    <property type="entry name" value="HISTIDINE BIOSYNTHESIS BIFUNCTIONAL PROTEIN HIS7"/>
    <property type="match status" value="1"/>
</dbReference>
<dbReference type="Pfam" id="PF01503">
    <property type="entry name" value="PRA-PH"/>
    <property type="match status" value="1"/>
</dbReference>
<dbReference type="SUPFAM" id="SSF101386">
    <property type="entry name" value="all-alpha NTP pyrophosphatases"/>
    <property type="match status" value="1"/>
</dbReference>
<sequence length="94" mass="10826">MSNEIVDKLYKVILDRIEKRPTGSYTVEIVNKGKAYVARKVGEESVETIVASLAENKERFISEVADLIYHLLVLMALEGVTPDDIYRELERRRK</sequence>
<protein>
    <recommendedName>
        <fullName evidence="1">Phosphoribosyl-ATP pyrophosphatase</fullName>
        <shortName evidence="1">PRA-PH</shortName>
        <ecNumber evidence="1">3.6.1.31</ecNumber>
    </recommendedName>
</protein>
<organism>
    <name type="scientific">Saccharolobus islandicus (strain M.16.27)</name>
    <name type="common">Sulfolobus islandicus</name>
    <dbReference type="NCBI Taxonomy" id="427318"/>
    <lineage>
        <taxon>Archaea</taxon>
        <taxon>Thermoproteota</taxon>
        <taxon>Thermoprotei</taxon>
        <taxon>Sulfolobales</taxon>
        <taxon>Sulfolobaceae</taxon>
        <taxon>Saccharolobus</taxon>
    </lineage>
</organism>
<comment type="catalytic activity">
    <reaction evidence="1">
        <text>1-(5-phospho-beta-D-ribosyl)-ATP + H2O = 1-(5-phospho-beta-D-ribosyl)-5'-AMP + diphosphate + H(+)</text>
        <dbReference type="Rhea" id="RHEA:22828"/>
        <dbReference type="ChEBI" id="CHEBI:15377"/>
        <dbReference type="ChEBI" id="CHEBI:15378"/>
        <dbReference type="ChEBI" id="CHEBI:33019"/>
        <dbReference type="ChEBI" id="CHEBI:59457"/>
        <dbReference type="ChEBI" id="CHEBI:73183"/>
        <dbReference type="EC" id="3.6.1.31"/>
    </reaction>
</comment>
<comment type="pathway">
    <text evidence="1">Amino-acid biosynthesis; L-histidine biosynthesis; L-histidine from 5-phospho-alpha-D-ribose 1-diphosphate: step 2/9.</text>
</comment>
<comment type="subcellular location">
    <subcellularLocation>
        <location evidence="1">Cytoplasm</location>
    </subcellularLocation>
</comment>
<comment type="similarity">
    <text evidence="1">Belongs to the PRA-PH family.</text>
</comment>
<proteinExistence type="inferred from homology"/>
<name>HIS2_SACI3</name>